<organism>
    <name type="scientific">Naja mossambica</name>
    <name type="common">Mozambique spitting cobra</name>
    <dbReference type="NCBI Taxonomy" id="8644"/>
    <lineage>
        <taxon>Eukaryota</taxon>
        <taxon>Metazoa</taxon>
        <taxon>Chordata</taxon>
        <taxon>Craniata</taxon>
        <taxon>Vertebrata</taxon>
        <taxon>Euteleostomi</taxon>
        <taxon>Lepidosauria</taxon>
        <taxon>Squamata</taxon>
        <taxon>Bifurcata</taxon>
        <taxon>Unidentata</taxon>
        <taxon>Episquamata</taxon>
        <taxon>Toxicofera</taxon>
        <taxon>Serpentes</taxon>
        <taxon>Colubroidea</taxon>
        <taxon>Elapidae</taxon>
        <taxon>Elapinae</taxon>
        <taxon>Naja</taxon>
    </lineage>
</organism>
<dbReference type="EC" id="3.4.24.-"/>
<dbReference type="EMBL" id="AY101383">
    <property type="protein sequence ID" value="AAM51550.1"/>
    <property type="molecule type" value="mRNA"/>
</dbReference>
<dbReference type="SMR" id="Q10749"/>
<dbReference type="MEROPS" id="M12.159"/>
<dbReference type="TopDownProteomics" id="Q10749"/>
<dbReference type="GO" id="GO:0005576">
    <property type="term" value="C:extracellular region"/>
    <property type="evidence" value="ECO:0000314"/>
    <property type="project" value="UniProtKB"/>
</dbReference>
<dbReference type="GO" id="GO:0005886">
    <property type="term" value="C:plasma membrane"/>
    <property type="evidence" value="ECO:0007669"/>
    <property type="project" value="TreeGrafter"/>
</dbReference>
<dbReference type="GO" id="GO:0004222">
    <property type="term" value="F:metalloendopeptidase activity"/>
    <property type="evidence" value="ECO:0007669"/>
    <property type="project" value="InterPro"/>
</dbReference>
<dbReference type="GO" id="GO:0008233">
    <property type="term" value="F:peptidase activity"/>
    <property type="evidence" value="ECO:0000314"/>
    <property type="project" value="UniProtKB"/>
</dbReference>
<dbReference type="GO" id="GO:0090729">
    <property type="term" value="F:toxin activity"/>
    <property type="evidence" value="ECO:0007669"/>
    <property type="project" value="UniProtKB-KW"/>
</dbReference>
<dbReference type="GO" id="GO:0008270">
    <property type="term" value="F:zinc ion binding"/>
    <property type="evidence" value="ECO:0000314"/>
    <property type="project" value="UniProtKB"/>
</dbReference>
<dbReference type="GO" id="GO:0030195">
    <property type="term" value="P:negative regulation of blood coagulation"/>
    <property type="evidence" value="ECO:0000314"/>
    <property type="project" value="UniProtKB"/>
</dbReference>
<dbReference type="GO" id="GO:0006508">
    <property type="term" value="P:proteolysis"/>
    <property type="evidence" value="ECO:0007669"/>
    <property type="project" value="UniProtKB-KW"/>
</dbReference>
<dbReference type="CDD" id="cd04269">
    <property type="entry name" value="ZnMc_adamalysin_II_like"/>
    <property type="match status" value="1"/>
</dbReference>
<dbReference type="FunFam" id="3.40.390.10:FF:000002">
    <property type="entry name" value="Disintegrin and metalloproteinase domain-containing protein 22"/>
    <property type="match status" value="1"/>
</dbReference>
<dbReference type="FunFam" id="4.10.70.10:FF:000001">
    <property type="entry name" value="Disintegrin and metalloproteinase domain-containing protein 22"/>
    <property type="match status" value="1"/>
</dbReference>
<dbReference type="Gene3D" id="3.40.390.10">
    <property type="entry name" value="Collagenase (Catalytic Domain)"/>
    <property type="match status" value="1"/>
</dbReference>
<dbReference type="Gene3D" id="4.10.70.10">
    <property type="entry name" value="Disintegrin domain"/>
    <property type="match status" value="1"/>
</dbReference>
<dbReference type="InterPro" id="IPR006586">
    <property type="entry name" value="ADAM_Cys-rich"/>
</dbReference>
<dbReference type="InterPro" id="IPR018358">
    <property type="entry name" value="Disintegrin_CS"/>
</dbReference>
<dbReference type="InterPro" id="IPR001762">
    <property type="entry name" value="Disintegrin_dom"/>
</dbReference>
<dbReference type="InterPro" id="IPR036436">
    <property type="entry name" value="Disintegrin_dom_sf"/>
</dbReference>
<dbReference type="InterPro" id="IPR024079">
    <property type="entry name" value="MetalloPept_cat_dom_sf"/>
</dbReference>
<dbReference type="InterPro" id="IPR001590">
    <property type="entry name" value="Peptidase_M12B"/>
</dbReference>
<dbReference type="InterPro" id="IPR002870">
    <property type="entry name" value="Peptidase_M12B_N"/>
</dbReference>
<dbReference type="InterPro" id="IPR034027">
    <property type="entry name" value="Reprolysin_adamalysin"/>
</dbReference>
<dbReference type="PANTHER" id="PTHR11905">
    <property type="entry name" value="ADAM A DISINTEGRIN AND METALLOPROTEASE DOMAIN"/>
    <property type="match status" value="1"/>
</dbReference>
<dbReference type="PANTHER" id="PTHR11905:SF32">
    <property type="entry name" value="DISINTEGRIN AND METALLOPROTEINASE DOMAIN-CONTAINING PROTEIN 28"/>
    <property type="match status" value="1"/>
</dbReference>
<dbReference type="Pfam" id="PF08516">
    <property type="entry name" value="ADAM_CR"/>
    <property type="match status" value="1"/>
</dbReference>
<dbReference type="Pfam" id="PF00200">
    <property type="entry name" value="Disintegrin"/>
    <property type="match status" value="1"/>
</dbReference>
<dbReference type="Pfam" id="PF01562">
    <property type="entry name" value="Pep_M12B_propep"/>
    <property type="match status" value="1"/>
</dbReference>
<dbReference type="Pfam" id="PF01421">
    <property type="entry name" value="Reprolysin"/>
    <property type="match status" value="1"/>
</dbReference>
<dbReference type="PRINTS" id="PR00289">
    <property type="entry name" value="DISINTEGRIN"/>
</dbReference>
<dbReference type="SMART" id="SM00608">
    <property type="entry name" value="ACR"/>
    <property type="match status" value="1"/>
</dbReference>
<dbReference type="SMART" id="SM00050">
    <property type="entry name" value="DISIN"/>
    <property type="match status" value="1"/>
</dbReference>
<dbReference type="SUPFAM" id="SSF57552">
    <property type="entry name" value="Blood coagulation inhibitor (disintegrin)"/>
    <property type="match status" value="1"/>
</dbReference>
<dbReference type="SUPFAM" id="SSF55486">
    <property type="entry name" value="Metalloproteases ('zincins'), catalytic domain"/>
    <property type="match status" value="1"/>
</dbReference>
<dbReference type="PROSITE" id="PS50215">
    <property type="entry name" value="ADAM_MEPRO"/>
    <property type="match status" value="1"/>
</dbReference>
<dbReference type="PROSITE" id="PS00427">
    <property type="entry name" value="DISINTEGRIN_1"/>
    <property type="match status" value="1"/>
</dbReference>
<dbReference type="PROSITE" id="PS50214">
    <property type="entry name" value="DISINTEGRIN_2"/>
    <property type="match status" value="1"/>
</dbReference>
<keyword id="KW-0106">Calcium</keyword>
<keyword id="KW-1217">Cell adhesion impairing toxin</keyword>
<keyword id="KW-0903">Direct protein sequencing</keyword>
<keyword id="KW-1015">Disulfide bond</keyword>
<keyword id="KW-0325">Glycoprotein</keyword>
<keyword id="KW-1199">Hemostasis impairing toxin</keyword>
<keyword id="KW-0378">Hydrolase</keyword>
<keyword id="KW-0479">Metal-binding</keyword>
<keyword id="KW-0482">Metalloprotease</keyword>
<keyword id="KW-1201">Platelet aggregation inhibiting toxin</keyword>
<keyword id="KW-0645">Protease</keyword>
<keyword id="KW-0964">Secreted</keyword>
<keyword id="KW-0732">Signal</keyword>
<keyword id="KW-0800">Toxin</keyword>
<keyword id="KW-0862">Zinc</keyword>
<keyword id="KW-0865">Zymogen</keyword>
<evidence type="ECO:0000250" key="1"/>
<evidence type="ECO:0000255" key="2"/>
<evidence type="ECO:0000255" key="3">
    <source>
        <dbReference type="PROSITE-ProRule" id="PRU00068"/>
    </source>
</evidence>
<evidence type="ECO:0000255" key="4">
    <source>
        <dbReference type="PROSITE-ProRule" id="PRU00276"/>
    </source>
</evidence>
<evidence type="ECO:0000269" key="5">
    <source>
    </source>
</evidence>
<evidence type="ECO:0000269" key="6">
    <source>
    </source>
</evidence>
<evidence type="ECO:0000269" key="7">
    <source>
    </source>
</evidence>
<evidence type="ECO:0000269" key="8">
    <source>
    </source>
</evidence>
<evidence type="ECO:0000305" key="9"/>
<proteinExistence type="evidence at protein level"/>
<sequence length="609" mass="68176">MIQALLVAICLAVFPYQGSSIILESGNVNDYEVVYPQKVPALSKGGVQNPQPETKYEDTMQYEFHVNGEPVVLHLERNKGLFSEDYTETHYAPDGREITTSSPVQDHCYYHGYIQNEADSSAVISACDGLKGHFKHQGETYFIEPLELSDSEAHAIYKDENVEEEEEIPKICGVTQTTWESDEPIEKSSQLTNTPEQDRYLQAKKYIEFYVVVDNVMYRKYTGKLHVITRRVYEMVNALNTMYRRLNFHIALIGLEIWSNGNEINVQSDVQATLDLFGEWRENKLLPRKRNDNAQLLTSTEFNGTTTGLGYIGSLCSPKKSVAVVQDHSKSTSMVAITMAHQMGHNLGMNDDRASCTCGSNKCIMSTKYYESLSEFSSCSVQEHREYLLRDRPQCILNKPSRKAIVTPPVCGNYFVERGEECDCGSPEDCQNTCCDAATCKLQHEAQCDSGECCEKCKFKGAGAECRAAKNDCDFPELCTGRSAKCPKDSFQRNGHPCQNNQGYCYNGTCPTLTNQCATLWGPGAKMSPGLCFMLNWNARSCGLCRKENGRKILCAAKDVKCGRLFCKKKNSMICHCPPPSKDPNYGMVAPGTKCGVKKVCRNRQCVKV</sequence>
<name>VM3M1_NAJMO</name>
<protein>
    <recommendedName>
        <fullName>Snake venom metalloproteinase-disintegrin-like mocarhagin</fullName>
        <shortName>MOC</shortName>
        <shortName>Mocarhagin-1</shortName>
        <shortName>SVMP</shortName>
        <ecNumber>3.4.24.-</ecNumber>
    </recommendedName>
    <alternativeName>
        <fullName>Zinc metalloproteinase mocarhagin</fullName>
    </alternativeName>
</protein>
<feature type="signal peptide" evidence="2">
    <location>
        <begin position="1"/>
        <end position="20"/>
    </location>
</feature>
<feature type="propeptide" id="PRO_0000326257" evidence="7">
    <location>
        <begin position="21"/>
        <end position="191"/>
    </location>
</feature>
<feature type="chain" id="PRO_0000078194" description="Snake venom metalloproteinase-disintegrin-like mocarhagin">
    <location>
        <begin position="192"/>
        <end position="609"/>
    </location>
</feature>
<feature type="domain" description="Peptidase M12B" evidence="4">
    <location>
        <begin position="205"/>
        <end position="400"/>
    </location>
</feature>
<feature type="domain" description="Disintegrin" evidence="3">
    <location>
        <begin position="408"/>
        <end position="494"/>
    </location>
</feature>
<feature type="short sequence motif" description="D/ECD-tripeptide">
    <location>
        <begin position="472"/>
        <end position="474"/>
    </location>
</feature>
<feature type="binding site" evidence="1">
    <location>
        <position position="208"/>
    </location>
    <ligand>
        <name>Ca(2+)</name>
        <dbReference type="ChEBI" id="CHEBI:29108"/>
        <label>1</label>
    </ligand>
</feature>
<feature type="binding site" evidence="1">
    <location>
        <position position="292"/>
    </location>
    <ligand>
        <name>Ca(2+)</name>
        <dbReference type="ChEBI" id="CHEBI:29108"/>
        <label>1</label>
    </ligand>
</feature>
<feature type="binding site" evidence="4">
    <location>
        <position position="341"/>
    </location>
    <ligand>
        <name>Zn(2+)</name>
        <dbReference type="ChEBI" id="CHEBI:29105"/>
        <note>catalytic</note>
    </ligand>
</feature>
<feature type="binding site" evidence="4">
    <location>
        <position position="345"/>
    </location>
    <ligand>
        <name>Zn(2+)</name>
        <dbReference type="ChEBI" id="CHEBI:29105"/>
        <note>catalytic</note>
    </ligand>
</feature>
<feature type="binding site" evidence="1">
    <location>
        <position position="395"/>
    </location>
    <ligand>
        <name>Ca(2+)</name>
        <dbReference type="ChEBI" id="CHEBI:29108"/>
        <label>1</label>
    </ligand>
</feature>
<feature type="binding site" evidence="1">
    <location>
        <position position="398"/>
    </location>
    <ligand>
        <name>Ca(2+)</name>
        <dbReference type="ChEBI" id="CHEBI:29108"/>
        <label>1</label>
    </ligand>
</feature>
<feature type="binding site" evidence="1">
    <location>
        <position position="410"/>
    </location>
    <ligand>
        <name>Ca(2+)</name>
        <dbReference type="ChEBI" id="CHEBI:29108"/>
        <label>2</label>
    </ligand>
</feature>
<feature type="binding site" evidence="1">
    <location>
        <position position="413"/>
    </location>
    <ligand>
        <name>Ca(2+)</name>
        <dbReference type="ChEBI" id="CHEBI:29108"/>
        <label>2</label>
    </ligand>
</feature>
<feature type="binding site" evidence="1">
    <location>
        <position position="415"/>
    </location>
    <ligand>
        <name>Ca(2+)</name>
        <dbReference type="ChEBI" id="CHEBI:29108"/>
        <label>2</label>
    </ligand>
</feature>
<feature type="binding site" evidence="1">
    <location>
        <position position="417"/>
    </location>
    <ligand>
        <name>Ca(2+)</name>
        <dbReference type="ChEBI" id="CHEBI:29108"/>
        <label>2</label>
    </ligand>
</feature>
<feature type="binding site" evidence="1">
    <location>
        <position position="420"/>
    </location>
    <ligand>
        <name>Ca(2+)</name>
        <dbReference type="ChEBI" id="CHEBI:29108"/>
        <label>2</label>
    </ligand>
</feature>
<feature type="binding site" evidence="1">
    <location>
        <position position="423"/>
    </location>
    <ligand>
        <name>Ca(2+)</name>
        <dbReference type="ChEBI" id="CHEBI:29108"/>
        <label>2</label>
    </ligand>
</feature>
<feature type="glycosylation site" description="N-linked (GlcNAc...) asparagine" evidence="2">
    <location>
        <position position="303"/>
    </location>
</feature>
<feature type="glycosylation site" description="N-linked (GlcNAc...) asparagine" evidence="2">
    <location>
        <position position="507"/>
    </location>
</feature>
<feature type="disulfide bond" evidence="1">
    <location>
        <begin position="316"/>
        <end position="395"/>
    </location>
</feature>
<feature type="disulfide bond" evidence="1">
    <location>
        <begin position="356"/>
        <end position="379"/>
    </location>
</feature>
<feature type="disulfide bond" evidence="1">
    <location>
        <begin position="358"/>
        <end position="363"/>
    </location>
</feature>
<feature type="disulfide bond" evidence="1">
    <location>
        <begin position="411"/>
        <end position="440"/>
    </location>
</feature>
<feature type="disulfide bond" evidence="1">
    <location>
        <begin position="422"/>
        <end position="435"/>
    </location>
</feature>
<feature type="disulfide bond" evidence="1">
    <location>
        <begin position="424"/>
        <end position="430"/>
    </location>
</feature>
<feature type="disulfide bond" evidence="1">
    <location>
        <begin position="434"/>
        <end position="457"/>
    </location>
</feature>
<feature type="disulfide bond" evidence="1">
    <location>
        <begin position="448"/>
        <end position="454"/>
    </location>
</feature>
<feature type="disulfide bond" evidence="1">
    <location>
        <begin position="453"/>
        <end position="479"/>
    </location>
</feature>
<feature type="disulfide bond" evidence="1">
    <location>
        <begin position="466"/>
        <end position="486"/>
    </location>
</feature>
<feature type="disulfide bond" evidence="1">
    <location>
        <begin position="473"/>
        <end position="505"/>
    </location>
</feature>
<feature type="disulfide bond" evidence="1">
    <location>
        <begin position="498"/>
        <end position="510"/>
    </location>
</feature>
<feature type="disulfide bond" evidence="1">
    <location>
        <begin position="517"/>
        <end position="567"/>
    </location>
</feature>
<feature type="disulfide bond" evidence="1">
    <location>
        <begin position="532"/>
        <end position="575"/>
    </location>
</feature>
<feature type="disulfide bond" evidence="1">
    <location>
        <begin position="545"/>
        <end position="555"/>
    </location>
</feature>
<feature type="disulfide bond" evidence="1">
    <location>
        <begin position="562"/>
        <end position="601"/>
    </location>
</feature>
<feature type="disulfide bond" evidence="1">
    <location>
        <begin position="595"/>
        <end position="606"/>
    </location>
</feature>
<feature type="sequence conflict" description="In Ref. 2; AA sequence." evidence="9" ref="2">
    <original>TPEQDR</original>
    <variation>CPELIP</variation>
    <location>
        <begin position="194"/>
        <end position="199"/>
    </location>
</feature>
<feature type="sequence conflict" description="In Ref. 2; AA sequence." evidence="9" ref="2">
    <original>K</original>
    <variation>C</variation>
    <location>
        <position position="205"/>
    </location>
</feature>
<accession>Q10749</accession>
<accession>Q8JGN1</accession>
<reference key="1">
    <citation type="submission" date="2002-05" db="EMBL/GenBank/DDBJ databases">
        <title>Molecular characterization of mocarhagins: a multi-gene family of metalloproteinases expressed in cobra venom.</title>
        <authorList>
            <person name="Sako D."/>
            <person name="Shaw G.D."/>
        </authorList>
    </citation>
    <scope>NUCLEOTIDE SEQUENCE [MRNA]</scope>
    <source>
        <tissue>Venom gland</tissue>
    </source>
</reference>
<reference evidence="9" key="2">
    <citation type="journal article" date="1996" name="Biochemistry">
        <title>Mocarhagin, a novel cobra venom metalloproteinase, cleaves the platelet von Willebrand factor receptor glycoprotein Ibalpha. Identification of the sulfated tyrosine/anionic sequence Tyr-276-Glu-282 of glycoprotein Ibalpha as a binding site for von Willebrand factor and alpha-thrombin.</title>
        <authorList>
            <person name="Ward C.M."/>
            <person name="Andrews R.K."/>
            <person name="Smith I."/>
            <person name="Berndt M.C."/>
        </authorList>
    </citation>
    <scope>PROTEIN SEQUENCE OF 192-215</scope>
    <scope>FUNCTION</scope>
    <source>
        <tissue evidence="7">Venom</tissue>
    </source>
</reference>
<reference key="3">
    <citation type="journal article" date="1995" name="J. Biol. Chem.">
        <title>A novel cobra venom metalloproteinase, mocarhagin, cleaves a 10-amino acid peptide from the mature N terminus of P-selectin glycoprotein ligand receptor, PSGL-1, and abolishes P-selectin binding.</title>
        <authorList>
            <person name="De Luca M."/>
            <person name="Dunlop L.C."/>
            <person name="Andrews R.K."/>
            <person name="Flannery J.V. Jr."/>
            <person name="Ettling R."/>
            <person name="Cumming D.A."/>
            <person name="Veldman G.M."/>
            <person name="Berndt M.C."/>
        </authorList>
    </citation>
    <scope>FUNCTION</scope>
    <scope>ACTIVITY REGULATION</scope>
</reference>
<reference key="4">
    <citation type="journal article" date="1996" name="Toxicon">
        <title>Characterization of mocarhagin, a cobra venom metalloproteinase from Naja mocambique mocambique, and related proteins from other Elapidae venoms.</title>
        <authorList>
            <person name="Ward C.M."/>
            <person name="Vinogradov D.V."/>
            <person name="Andrews R.K."/>
            <person name="Berndt M.C."/>
        </authorList>
    </citation>
    <scope>FUNCTION</scope>
</reference>
<reference key="5">
    <citation type="journal article" date="2003" name="Br. J. Pharmacol.">
        <title>Thrombin-induced conversion of fibrinogen to fibrin results in rapid platelet trapping which is not dependent on platelet activation or GPIb.</title>
        <authorList>
            <person name="Jarvis G.E."/>
            <person name="Atkinson B.T."/>
            <person name="Frampton J."/>
            <person name="Watson S.P."/>
        </authorList>
    </citation>
    <scope>FUNCTION</scope>
</reference>
<reference key="6">
    <citation type="journal article" date="2013" name="Proc. Natl. Acad. Sci. U.S.A.">
        <title>The king cobra genome reveals dynamic gene evolution and adaptation in the snake venom system.</title>
        <authorList>
            <person name="Vonk F.J."/>
            <person name="Casewell N.R."/>
            <person name="Henkel C.V."/>
            <person name="Heimberg A.M."/>
            <person name="Jansen H.J."/>
            <person name="McCleary R.J."/>
            <person name="Kerkkamp H.M."/>
            <person name="Vos R.A."/>
            <person name="Guerreiro I."/>
            <person name="Calvete J.J."/>
            <person name="Wuster W."/>
            <person name="Woods A.E."/>
            <person name="Logan J.M."/>
            <person name="Harrison R.A."/>
            <person name="Castoe T.A."/>
            <person name="de Koning A.P."/>
            <person name="Pollock D.D."/>
            <person name="Yandell M."/>
            <person name="Calderon D."/>
            <person name="Renjifo C."/>
            <person name="Currier R.B."/>
            <person name="Salgado D."/>
            <person name="Pla D."/>
            <person name="Sanz L."/>
            <person name="Hyder A.S."/>
            <person name="Ribeiro J.M."/>
            <person name="Arntzen J.W."/>
            <person name="van den Thillart G.E."/>
            <person name="Boetzer M."/>
            <person name="Pirovano W."/>
            <person name="Dirks R.P."/>
            <person name="Spaink H.P."/>
            <person name="Duboule D."/>
            <person name="McGlinn E."/>
            <person name="Kini R.M."/>
            <person name="Richardson M.K."/>
        </authorList>
    </citation>
    <scope>IDENTIFICATION BY MASS SPECTROMETRY</scope>
    <source>
        <tissue>Venom</tissue>
    </source>
</reference>
<comment type="function">
    <text evidence="5 6 7 8">Snake venom zinc metalloproteinase that inhibits platelet aggregation by cleaving platelet glycoprotein Ib alpha (GP1BA) at Glu-298/Asp-299, and abolishes binding of von Willebrand factor (VWF) to GPIBA. Cleaves P-selectin glycoprotein ligand-1 (PSGL-1/SELPLG) at Tyr-51/Asp-52, and completely abolishes the binding of PSGL-1 to P-selectin. Anionic amino acid sequences containing sulfated tyrosines are needed for cleavages. Inhibits the thrombin-induced platelet aggregation, and the thrombin-induced release of ATP and ADP. Has lectin activity (inhibited by heparin).</text>
</comment>
<comment type="cofactor">
    <cofactor evidence="1">
        <name>Zn(2+)</name>
        <dbReference type="ChEBI" id="CHEBI:29105"/>
    </cofactor>
    <text evidence="1">Binds 1 zinc ion per subunit.</text>
</comment>
<comment type="activity regulation">
    <text evidence="6">Inhibited by EDTA and diisopropyl fluorophosphate (DFP). Also inhibited by an excess of zinc or calcium ions.</text>
</comment>
<comment type="subunit">
    <text evidence="1">Monomer.</text>
</comment>
<comment type="subcellular location">
    <subcellularLocation>
        <location evidence="7">Secreted</location>
    </subcellularLocation>
</comment>
<comment type="tissue specificity">
    <text evidence="7">Expressed by the venom gland.</text>
</comment>
<comment type="similarity">
    <text evidence="9">Belongs to the venom metalloproteinase (M12B) family. P-III subfamily. P-IIIa sub-subfamily.</text>
</comment>
<comment type="caution">
    <text evidence="9">Asp-351 is present instead of the conserved His which is expected to be zinc-binding residue. There is therefore some uncertainty concerning the enzymatic activity of this protein.</text>
</comment>